<evidence type="ECO:0000255" key="1">
    <source>
        <dbReference type="HAMAP-Rule" id="MF_00409"/>
    </source>
</evidence>
<sequence>MIKLLYPKFWQKQNIIAYLLLPVSLIYQFLGYLRASLAQPIMLPAKVICVGNCSVGGTGKTQIVIYLAKLLKARNVSFVIVTKGYGSKLKNAAIVNARHTVLEVGDEGVILVKYGLVIATKNIKEALPLINELKPDVIIVDDFLQNPHFHKDFTIVSVDSQRLFGNGFLIPAGPLRQYPNKALDAADLVFLVSSTNDKMLNILTPYVNKLINAQIVPLNNIDKTKNYFAFSGIGNPERFFSTLKNYGLNIVGYKIFPDHYNYLQADLENLYSLAKEHNNATLITTRKDYVKFHDLNNNIVCLDVELSINNPNLLNEKIFKKAQIFN</sequence>
<name>LPXK_RICCK</name>
<reference key="1">
    <citation type="submission" date="2007-09" db="EMBL/GenBank/DDBJ databases">
        <title>Complete genome sequence of Rickettsia canadensis.</title>
        <authorList>
            <person name="Madan A."/>
            <person name="Fahey J."/>
            <person name="Helton E."/>
            <person name="Ketteman M."/>
            <person name="Madan A."/>
            <person name="Rodrigues S."/>
            <person name="Sanchez A."/>
            <person name="Whiting M."/>
            <person name="Dasch G."/>
            <person name="Eremeeva M."/>
        </authorList>
    </citation>
    <scope>NUCLEOTIDE SEQUENCE [LARGE SCALE GENOMIC DNA]</scope>
    <source>
        <strain>McKiel</strain>
    </source>
</reference>
<dbReference type="EC" id="2.7.1.130" evidence="1"/>
<dbReference type="EMBL" id="CP000409">
    <property type="protein sequence ID" value="ABV73864.1"/>
    <property type="molecule type" value="Genomic_DNA"/>
</dbReference>
<dbReference type="RefSeq" id="WP_012149059.1">
    <property type="nucleotide sequence ID" value="NC_009879.1"/>
</dbReference>
<dbReference type="SMR" id="A8EZT1"/>
<dbReference type="STRING" id="293613.A1E_04695"/>
<dbReference type="KEGG" id="rcm:A1E_04695"/>
<dbReference type="eggNOG" id="COG1663">
    <property type="taxonomic scope" value="Bacteria"/>
</dbReference>
<dbReference type="HOGENOM" id="CLU_038816_0_0_5"/>
<dbReference type="UniPathway" id="UPA00359">
    <property type="reaction ID" value="UER00482"/>
</dbReference>
<dbReference type="Proteomes" id="UP000007056">
    <property type="component" value="Chromosome"/>
</dbReference>
<dbReference type="GO" id="GO:0005886">
    <property type="term" value="C:plasma membrane"/>
    <property type="evidence" value="ECO:0007669"/>
    <property type="project" value="TreeGrafter"/>
</dbReference>
<dbReference type="GO" id="GO:0005524">
    <property type="term" value="F:ATP binding"/>
    <property type="evidence" value="ECO:0007669"/>
    <property type="project" value="UniProtKB-UniRule"/>
</dbReference>
<dbReference type="GO" id="GO:0009029">
    <property type="term" value="F:tetraacyldisaccharide 4'-kinase activity"/>
    <property type="evidence" value="ECO:0007669"/>
    <property type="project" value="UniProtKB-UniRule"/>
</dbReference>
<dbReference type="GO" id="GO:0009245">
    <property type="term" value="P:lipid A biosynthetic process"/>
    <property type="evidence" value="ECO:0007669"/>
    <property type="project" value="UniProtKB-UniRule"/>
</dbReference>
<dbReference type="GO" id="GO:0009244">
    <property type="term" value="P:lipopolysaccharide core region biosynthetic process"/>
    <property type="evidence" value="ECO:0007669"/>
    <property type="project" value="TreeGrafter"/>
</dbReference>
<dbReference type="HAMAP" id="MF_00409">
    <property type="entry name" value="LpxK"/>
    <property type="match status" value="1"/>
</dbReference>
<dbReference type="InterPro" id="IPR003758">
    <property type="entry name" value="LpxK"/>
</dbReference>
<dbReference type="InterPro" id="IPR027417">
    <property type="entry name" value="P-loop_NTPase"/>
</dbReference>
<dbReference type="NCBIfam" id="TIGR00682">
    <property type="entry name" value="lpxK"/>
    <property type="match status" value="1"/>
</dbReference>
<dbReference type="PANTHER" id="PTHR42724">
    <property type="entry name" value="TETRAACYLDISACCHARIDE 4'-KINASE"/>
    <property type="match status" value="1"/>
</dbReference>
<dbReference type="PANTHER" id="PTHR42724:SF1">
    <property type="entry name" value="TETRAACYLDISACCHARIDE 4'-KINASE, MITOCHONDRIAL-RELATED"/>
    <property type="match status" value="1"/>
</dbReference>
<dbReference type="Pfam" id="PF02606">
    <property type="entry name" value="LpxK"/>
    <property type="match status" value="1"/>
</dbReference>
<dbReference type="SUPFAM" id="SSF52540">
    <property type="entry name" value="P-loop containing nucleoside triphosphate hydrolases"/>
    <property type="match status" value="1"/>
</dbReference>
<comment type="function">
    <text evidence="1">Transfers the gamma-phosphate of ATP to the 4'-position of a tetraacyldisaccharide 1-phosphate intermediate (termed DS-1-P) to form tetraacyldisaccharide 1,4'-bis-phosphate (lipid IVA).</text>
</comment>
<comment type="catalytic activity">
    <reaction evidence="1">
        <text>a lipid A disaccharide + ATP = a lipid IVA + ADP + H(+)</text>
        <dbReference type="Rhea" id="RHEA:67840"/>
        <dbReference type="ChEBI" id="CHEBI:15378"/>
        <dbReference type="ChEBI" id="CHEBI:30616"/>
        <dbReference type="ChEBI" id="CHEBI:176343"/>
        <dbReference type="ChEBI" id="CHEBI:176425"/>
        <dbReference type="ChEBI" id="CHEBI:456216"/>
        <dbReference type="EC" id="2.7.1.130"/>
    </reaction>
</comment>
<comment type="pathway">
    <text evidence="1">Glycolipid biosynthesis; lipid IV(A) biosynthesis; lipid IV(A) from (3R)-3-hydroxytetradecanoyl-[acyl-carrier-protein] and UDP-N-acetyl-alpha-D-glucosamine: step 6/6.</text>
</comment>
<comment type="similarity">
    <text evidence="1">Belongs to the LpxK family.</text>
</comment>
<organism>
    <name type="scientific">Rickettsia canadensis (strain McKiel)</name>
    <dbReference type="NCBI Taxonomy" id="293613"/>
    <lineage>
        <taxon>Bacteria</taxon>
        <taxon>Pseudomonadati</taxon>
        <taxon>Pseudomonadota</taxon>
        <taxon>Alphaproteobacteria</taxon>
        <taxon>Rickettsiales</taxon>
        <taxon>Rickettsiaceae</taxon>
        <taxon>Rickettsieae</taxon>
        <taxon>Rickettsia</taxon>
        <taxon>belli group</taxon>
    </lineage>
</organism>
<feature type="chain" id="PRO_1000049904" description="Tetraacyldisaccharide 4'-kinase">
    <location>
        <begin position="1"/>
        <end position="326"/>
    </location>
</feature>
<feature type="binding site" evidence="1">
    <location>
        <begin position="54"/>
        <end position="61"/>
    </location>
    <ligand>
        <name>ATP</name>
        <dbReference type="ChEBI" id="CHEBI:30616"/>
    </ligand>
</feature>
<accession>A8EZT1</accession>
<keyword id="KW-0067">ATP-binding</keyword>
<keyword id="KW-0418">Kinase</keyword>
<keyword id="KW-0441">Lipid A biosynthesis</keyword>
<keyword id="KW-0444">Lipid biosynthesis</keyword>
<keyword id="KW-0443">Lipid metabolism</keyword>
<keyword id="KW-0547">Nucleotide-binding</keyword>
<keyword id="KW-0808">Transferase</keyword>
<gene>
    <name evidence="1" type="primary">lpxK</name>
    <name type="ordered locus">A1E_04695</name>
</gene>
<protein>
    <recommendedName>
        <fullName evidence="1">Tetraacyldisaccharide 4'-kinase</fullName>
        <ecNumber evidence="1">2.7.1.130</ecNumber>
    </recommendedName>
    <alternativeName>
        <fullName evidence="1">Lipid A 4'-kinase</fullName>
    </alternativeName>
</protein>
<proteinExistence type="inferred from homology"/>